<sequence length="186" mass="21425">MKKTQYNNLVSSYARVLFHVSGSRLGIIRKEVEFLLAFFKDQRDVFVYLSHPMISFAHKKEVMLSINEHLSENLVKFIMVIFANKRSSLLILILEKFLSLARENENEFEITIKSAETLKESDIKIITESLSFLGKIIKVSNVVDPSILGGFVVRYGFNLIDASLKSYLDRLVDLSKMEILKVRNFV</sequence>
<gene>
    <name evidence="1" type="primary">atpH</name>
    <name type="ordered locus">WD_0656</name>
</gene>
<protein>
    <recommendedName>
        <fullName evidence="1">ATP synthase subunit delta</fullName>
    </recommendedName>
    <alternativeName>
        <fullName evidence="1">ATP synthase F(1) sector subunit delta</fullName>
    </alternativeName>
    <alternativeName>
        <fullName evidence="1">F-type ATPase subunit delta</fullName>
        <shortName evidence="1">F-ATPase subunit delta</shortName>
    </alternativeName>
</protein>
<proteinExistence type="inferred from homology"/>
<comment type="function">
    <text evidence="1">F(1)F(0) ATP synthase produces ATP from ADP in the presence of a proton or sodium gradient. F-type ATPases consist of two structural domains, F(1) containing the extramembraneous catalytic core and F(0) containing the membrane proton channel, linked together by a central stalk and a peripheral stalk. During catalysis, ATP synthesis in the catalytic domain of F(1) is coupled via a rotary mechanism of the central stalk subunits to proton translocation.</text>
</comment>
<comment type="function">
    <text evidence="1">This protein is part of the stalk that links CF(0) to CF(1). It either transmits conformational changes from CF(0) to CF(1) or is implicated in proton conduction.</text>
</comment>
<comment type="subunit">
    <text evidence="1">F-type ATPases have 2 components, F(1) - the catalytic core - and F(0) - the membrane proton channel. F(1) has five subunits: alpha(3), beta(3), gamma(1), delta(1), epsilon(1). F(0) has three main subunits: a(1), b(2) and c(10-14). The alpha and beta chains form an alternating ring which encloses part of the gamma chain. F(1) is attached to F(0) by a central stalk formed by the gamma and epsilon chains, while a peripheral stalk is formed by the delta and b chains.</text>
</comment>
<comment type="subcellular location">
    <subcellularLocation>
        <location evidence="1">Cell membrane</location>
        <topology evidence="1">Peripheral membrane protein</topology>
    </subcellularLocation>
</comment>
<comment type="similarity">
    <text evidence="1">Belongs to the ATPase delta chain family.</text>
</comment>
<organism>
    <name type="scientific">Wolbachia pipientis wMel</name>
    <dbReference type="NCBI Taxonomy" id="163164"/>
    <lineage>
        <taxon>Bacteria</taxon>
        <taxon>Pseudomonadati</taxon>
        <taxon>Pseudomonadota</taxon>
        <taxon>Alphaproteobacteria</taxon>
        <taxon>Rickettsiales</taxon>
        <taxon>Anaplasmataceae</taxon>
        <taxon>Wolbachieae</taxon>
        <taxon>Wolbachia</taxon>
    </lineage>
</organism>
<accession>Q73HB1</accession>
<reference key="1">
    <citation type="journal article" date="2004" name="PLoS Biol.">
        <title>Phylogenomics of the reproductive parasite Wolbachia pipientis wMel: a streamlined genome overrun by mobile genetic elements.</title>
        <authorList>
            <person name="Wu M."/>
            <person name="Sun L.V."/>
            <person name="Vamathevan J.J."/>
            <person name="Riegler M."/>
            <person name="DeBoy R.T."/>
            <person name="Brownlie J.C."/>
            <person name="McGraw E.A."/>
            <person name="Martin W."/>
            <person name="Esser C."/>
            <person name="Ahmadinejad N."/>
            <person name="Wiegand C."/>
            <person name="Madupu R."/>
            <person name="Beanan M.J."/>
            <person name="Brinkac L.M."/>
            <person name="Daugherty S.C."/>
            <person name="Durkin A.S."/>
            <person name="Kolonay J.F."/>
            <person name="Nelson W.C."/>
            <person name="Mohamoud Y."/>
            <person name="Lee P."/>
            <person name="Berry K.J."/>
            <person name="Young M.B."/>
            <person name="Utterback T.R."/>
            <person name="Weidman J.F."/>
            <person name="Nierman W.C."/>
            <person name="Paulsen I.T."/>
            <person name="Nelson K.E."/>
            <person name="Tettelin H."/>
            <person name="O'Neill S.L."/>
            <person name="Eisen J.A."/>
        </authorList>
    </citation>
    <scope>NUCLEOTIDE SEQUENCE [LARGE SCALE GENOMIC DNA]</scope>
</reference>
<dbReference type="EMBL" id="AE017196">
    <property type="protein sequence ID" value="AAS14354.1"/>
    <property type="molecule type" value="Genomic_DNA"/>
</dbReference>
<dbReference type="RefSeq" id="WP_010962742.1">
    <property type="nucleotide sequence ID" value="NZ_OX384529.1"/>
</dbReference>
<dbReference type="SMR" id="Q73HB1"/>
<dbReference type="EnsemblBacteria" id="AAS14354">
    <property type="protein sequence ID" value="AAS14354"/>
    <property type="gene ID" value="WD_0656"/>
</dbReference>
<dbReference type="GeneID" id="70036138"/>
<dbReference type="KEGG" id="wol:WD_0656"/>
<dbReference type="eggNOG" id="COG0712">
    <property type="taxonomic scope" value="Bacteria"/>
</dbReference>
<dbReference type="Proteomes" id="UP000008215">
    <property type="component" value="Chromosome"/>
</dbReference>
<dbReference type="GO" id="GO:0005886">
    <property type="term" value="C:plasma membrane"/>
    <property type="evidence" value="ECO:0007669"/>
    <property type="project" value="UniProtKB-SubCell"/>
</dbReference>
<dbReference type="GO" id="GO:0045259">
    <property type="term" value="C:proton-transporting ATP synthase complex"/>
    <property type="evidence" value="ECO:0007669"/>
    <property type="project" value="UniProtKB-KW"/>
</dbReference>
<dbReference type="GO" id="GO:0046933">
    <property type="term" value="F:proton-transporting ATP synthase activity, rotational mechanism"/>
    <property type="evidence" value="ECO:0007669"/>
    <property type="project" value="UniProtKB-UniRule"/>
</dbReference>
<dbReference type="Gene3D" id="1.10.520.20">
    <property type="entry name" value="N-terminal domain of the delta subunit of the F1F0-ATP synthase"/>
    <property type="match status" value="1"/>
</dbReference>
<dbReference type="HAMAP" id="MF_01416">
    <property type="entry name" value="ATP_synth_delta_bact"/>
    <property type="match status" value="1"/>
</dbReference>
<dbReference type="InterPro" id="IPR026015">
    <property type="entry name" value="ATP_synth_OSCP/delta_N_sf"/>
</dbReference>
<dbReference type="InterPro" id="IPR020781">
    <property type="entry name" value="ATPase_OSCP/d_CS"/>
</dbReference>
<dbReference type="InterPro" id="IPR000711">
    <property type="entry name" value="ATPase_OSCP/dsu"/>
</dbReference>
<dbReference type="NCBIfam" id="TIGR01145">
    <property type="entry name" value="ATP_synt_delta"/>
    <property type="match status" value="1"/>
</dbReference>
<dbReference type="PANTHER" id="PTHR11910">
    <property type="entry name" value="ATP SYNTHASE DELTA CHAIN"/>
    <property type="match status" value="1"/>
</dbReference>
<dbReference type="Pfam" id="PF00213">
    <property type="entry name" value="OSCP"/>
    <property type="match status" value="1"/>
</dbReference>
<dbReference type="PRINTS" id="PR00125">
    <property type="entry name" value="ATPASEDELTA"/>
</dbReference>
<dbReference type="SUPFAM" id="SSF47928">
    <property type="entry name" value="N-terminal domain of the delta subunit of the F1F0-ATP synthase"/>
    <property type="match status" value="1"/>
</dbReference>
<dbReference type="PROSITE" id="PS00389">
    <property type="entry name" value="ATPASE_DELTA"/>
    <property type="match status" value="1"/>
</dbReference>
<evidence type="ECO:0000255" key="1">
    <source>
        <dbReference type="HAMAP-Rule" id="MF_01416"/>
    </source>
</evidence>
<keyword id="KW-0066">ATP synthesis</keyword>
<keyword id="KW-1003">Cell membrane</keyword>
<keyword id="KW-0139">CF(1)</keyword>
<keyword id="KW-0375">Hydrogen ion transport</keyword>
<keyword id="KW-0406">Ion transport</keyword>
<keyword id="KW-0472">Membrane</keyword>
<keyword id="KW-0813">Transport</keyword>
<name>ATPD_WOLPM</name>
<feature type="chain" id="PRO_1000184831" description="ATP synthase subunit delta">
    <location>
        <begin position="1"/>
        <end position="186"/>
    </location>
</feature>